<gene>
    <name evidence="1" type="primary">groES</name>
    <name evidence="1" type="synonym">groS</name>
    <name type="ordered locus">Rleg2_0471</name>
</gene>
<proteinExistence type="inferred from homology"/>
<organism>
    <name type="scientific">Rhizobium leguminosarum bv. trifolii (strain WSM2304)</name>
    <dbReference type="NCBI Taxonomy" id="395492"/>
    <lineage>
        <taxon>Bacteria</taxon>
        <taxon>Pseudomonadati</taxon>
        <taxon>Pseudomonadota</taxon>
        <taxon>Alphaproteobacteria</taxon>
        <taxon>Hyphomicrobiales</taxon>
        <taxon>Rhizobiaceae</taxon>
        <taxon>Rhizobium/Agrobacterium group</taxon>
        <taxon>Rhizobium</taxon>
    </lineage>
</organism>
<keyword id="KW-0143">Chaperone</keyword>
<keyword id="KW-0963">Cytoplasm</keyword>
<keyword id="KW-1185">Reference proteome</keyword>
<sequence length="98" mass="10518">MASTNFRPLHDRVVVRRVESEAKTKGGIIIPDTAKEKPQEGEIVAVGSGARDESGKVVALDVKAGDRILFGKWSGTEVKIDGEDLLIMKEADIMGIIG</sequence>
<comment type="function">
    <text evidence="1">Together with the chaperonin GroEL, plays an essential role in assisting protein folding. The GroEL-GroES system forms a nano-cage that allows encapsulation of the non-native substrate proteins and provides a physical environment optimized to promote and accelerate protein folding. GroES binds to the apical surface of the GroEL ring, thereby capping the opening of the GroEL channel.</text>
</comment>
<comment type="subunit">
    <text evidence="1">Heptamer of 7 subunits arranged in a ring. Interacts with the chaperonin GroEL.</text>
</comment>
<comment type="subcellular location">
    <subcellularLocation>
        <location evidence="1">Cytoplasm</location>
    </subcellularLocation>
</comment>
<comment type="similarity">
    <text evidence="1">Belongs to the GroES chaperonin family.</text>
</comment>
<feature type="chain" id="PRO_1000129696" description="Co-chaperonin GroES">
    <location>
        <begin position="1"/>
        <end position="98"/>
    </location>
</feature>
<protein>
    <recommendedName>
        <fullName evidence="1">Co-chaperonin GroES</fullName>
    </recommendedName>
    <alternativeName>
        <fullName evidence="1">10 kDa chaperonin</fullName>
    </alternativeName>
    <alternativeName>
        <fullName evidence="1">Chaperonin-10</fullName>
        <shortName evidence="1">Cpn10</shortName>
    </alternativeName>
</protein>
<accession>B5ZRD7</accession>
<name>CH10_RHILW</name>
<reference key="1">
    <citation type="journal article" date="2010" name="Stand. Genomic Sci.">
        <title>Complete genome sequence of Rhizobium leguminosarum bv trifolii strain WSM2304, an effective microsymbiont of the South American clover Trifolium polymorphum.</title>
        <authorList>
            <person name="Reeve W."/>
            <person name="O'Hara G."/>
            <person name="Chain P."/>
            <person name="Ardley J."/>
            <person name="Brau L."/>
            <person name="Nandesena K."/>
            <person name="Tiwari R."/>
            <person name="Malfatti S."/>
            <person name="Kiss H."/>
            <person name="Lapidus A."/>
            <person name="Copeland A."/>
            <person name="Nolan M."/>
            <person name="Land M."/>
            <person name="Ivanova N."/>
            <person name="Mavromatis K."/>
            <person name="Markowitz V."/>
            <person name="Kyrpides N."/>
            <person name="Melino V."/>
            <person name="Denton M."/>
            <person name="Yates R."/>
            <person name="Howieson J."/>
        </authorList>
    </citation>
    <scope>NUCLEOTIDE SEQUENCE [LARGE SCALE GENOMIC DNA]</scope>
    <source>
        <strain>WSM2304</strain>
    </source>
</reference>
<dbReference type="EMBL" id="CP001191">
    <property type="protein sequence ID" value="ACI53769.1"/>
    <property type="molecule type" value="Genomic_DNA"/>
</dbReference>
<dbReference type="RefSeq" id="WP_003545797.1">
    <property type="nucleotide sequence ID" value="NC_011369.1"/>
</dbReference>
<dbReference type="SMR" id="B5ZRD7"/>
<dbReference type="STRING" id="395492.Rleg2_0471"/>
<dbReference type="GeneID" id="84668517"/>
<dbReference type="KEGG" id="rlt:Rleg2_0471"/>
<dbReference type="eggNOG" id="COG0234">
    <property type="taxonomic scope" value="Bacteria"/>
</dbReference>
<dbReference type="HOGENOM" id="CLU_132825_2_0_5"/>
<dbReference type="Proteomes" id="UP000008330">
    <property type="component" value="Chromosome"/>
</dbReference>
<dbReference type="GO" id="GO:0005737">
    <property type="term" value="C:cytoplasm"/>
    <property type="evidence" value="ECO:0007669"/>
    <property type="project" value="UniProtKB-SubCell"/>
</dbReference>
<dbReference type="GO" id="GO:0005524">
    <property type="term" value="F:ATP binding"/>
    <property type="evidence" value="ECO:0007669"/>
    <property type="project" value="InterPro"/>
</dbReference>
<dbReference type="GO" id="GO:0046872">
    <property type="term" value="F:metal ion binding"/>
    <property type="evidence" value="ECO:0007669"/>
    <property type="project" value="TreeGrafter"/>
</dbReference>
<dbReference type="GO" id="GO:0044183">
    <property type="term" value="F:protein folding chaperone"/>
    <property type="evidence" value="ECO:0007669"/>
    <property type="project" value="InterPro"/>
</dbReference>
<dbReference type="GO" id="GO:0051087">
    <property type="term" value="F:protein-folding chaperone binding"/>
    <property type="evidence" value="ECO:0007669"/>
    <property type="project" value="TreeGrafter"/>
</dbReference>
<dbReference type="GO" id="GO:0051082">
    <property type="term" value="F:unfolded protein binding"/>
    <property type="evidence" value="ECO:0007669"/>
    <property type="project" value="TreeGrafter"/>
</dbReference>
<dbReference type="GO" id="GO:0051085">
    <property type="term" value="P:chaperone cofactor-dependent protein refolding"/>
    <property type="evidence" value="ECO:0007669"/>
    <property type="project" value="TreeGrafter"/>
</dbReference>
<dbReference type="CDD" id="cd00320">
    <property type="entry name" value="cpn10"/>
    <property type="match status" value="1"/>
</dbReference>
<dbReference type="FunFam" id="2.30.33.40:FF:000001">
    <property type="entry name" value="10 kDa chaperonin"/>
    <property type="match status" value="1"/>
</dbReference>
<dbReference type="Gene3D" id="2.30.33.40">
    <property type="entry name" value="GroES chaperonin"/>
    <property type="match status" value="1"/>
</dbReference>
<dbReference type="HAMAP" id="MF_00580">
    <property type="entry name" value="CH10"/>
    <property type="match status" value="1"/>
</dbReference>
<dbReference type="InterPro" id="IPR020818">
    <property type="entry name" value="Chaperonin_GroES"/>
</dbReference>
<dbReference type="InterPro" id="IPR037124">
    <property type="entry name" value="Chaperonin_GroES_sf"/>
</dbReference>
<dbReference type="InterPro" id="IPR018369">
    <property type="entry name" value="Chaprnonin_Cpn10_CS"/>
</dbReference>
<dbReference type="InterPro" id="IPR011032">
    <property type="entry name" value="GroES-like_sf"/>
</dbReference>
<dbReference type="NCBIfam" id="NF001527">
    <property type="entry name" value="PRK00364.1-2"/>
    <property type="match status" value="1"/>
</dbReference>
<dbReference type="NCBIfam" id="NF001529">
    <property type="entry name" value="PRK00364.1-5"/>
    <property type="match status" value="1"/>
</dbReference>
<dbReference type="NCBIfam" id="NF001531">
    <property type="entry name" value="PRK00364.2-2"/>
    <property type="match status" value="1"/>
</dbReference>
<dbReference type="NCBIfam" id="NF001533">
    <property type="entry name" value="PRK00364.2-4"/>
    <property type="match status" value="1"/>
</dbReference>
<dbReference type="NCBIfam" id="NF001534">
    <property type="entry name" value="PRK00364.2-5"/>
    <property type="match status" value="1"/>
</dbReference>
<dbReference type="PANTHER" id="PTHR10772">
    <property type="entry name" value="10 KDA HEAT SHOCK PROTEIN"/>
    <property type="match status" value="1"/>
</dbReference>
<dbReference type="PANTHER" id="PTHR10772:SF58">
    <property type="entry name" value="CO-CHAPERONIN GROES"/>
    <property type="match status" value="1"/>
</dbReference>
<dbReference type="Pfam" id="PF00166">
    <property type="entry name" value="Cpn10"/>
    <property type="match status" value="1"/>
</dbReference>
<dbReference type="PRINTS" id="PR00297">
    <property type="entry name" value="CHAPERONIN10"/>
</dbReference>
<dbReference type="SMART" id="SM00883">
    <property type="entry name" value="Cpn10"/>
    <property type="match status" value="1"/>
</dbReference>
<dbReference type="SUPFAM" id="SSF50129">
    <property type="entry name" value="GroES-like"/>
    <property type="match status" value="1"/>
</dbReference>
<dbReference type="PROSITE" id="PS00681">
    <property type="entry name" value="CHAPERONINS_CPN10"/>
    <property type="match status" value="1"/>
</dbReference>
<evidence type="ECO:0000255" key="1">
    <source>
        <dbReference type="HAMAP-Rule" id="MF_00580"/>
    </source>
</evidence>